<organism>
    <name type="scientific">Bordetella avium (strain 197N)</name>
    <dbReference type="NCBI Taxonomy" id="360910"/>
    <lineage>
        <taxon>Bacteria</taxon>
        <taxon>Pseudomonadati</taxon>
        <taxon>Pseudomonadota</taxon>
        <taxon>Betaproteobacteria</taxon>
        <taxon>Burkholderiales</taxon>
        <taxon>Alcaligenaceae</taxon>
        <taxon>Bordetella</taxon>
    </lineage>
</organism>
<proteinExistence type="inferred from homology"/>
<gene>
    <name evidence="1" type="primary">acpP</name>
    <name type="ordered locus">BAV1122</name>
</gene>
<sequence>MESIEQRVKKIVAEQLGVNEAEIKNESSFLDDLGADSLDMVELVMALEDEFETEIPDEEAEKITTVQQAIDYINSHGKQ</sequence>
<dbReference type="EMBL" id="AM167904">
    <property type="protein sequence ID" value="CAJ48731.1"/>
    <property type="molecule type" value="Genomic_DNA"/>
</dbReference>
<dbReference type="RefSeq" id="WP_003813816.1">
    <property type="nucleotide sequence ID" value="NC_010645.1"/>
</dbReference>
<dbReference type="SMR" id="Q2KW22"/>
<dbReference type="STRING" id="360910.BAV1122"/>
<dbReference type="GeneID" id="92994638"/>
<dbReference type="KEGG" id="bav:BAV1122"/>
<dbReference type="eggNOG" id="COG0236">
    <property type="taxonomic scope" value="Bacteria"/>
</dbReference>
<dbReference type="HOGENOM" id="CLU_108696_5_1_4"/>
<dbReference type="OrthoDB" id="9804551at2"/>
<dbReference type="UniPathway" id="UPA00094"/>
<dbReference type="Proteomes" id="UP000001977">
    <property type="component" value="Chromosome"/>
</dbReference>
<dbReference type="GO" id="GO:0005829">
    <property type="term" value="C:cytosol"/>
    <property type="evidence" value="ECO:0007669"/>
    <property type="project" value="TreeGrafter"/>
</dbReference>
<dbReference type="GO" id="GO:0016020">
    <property type="term" value="C:membrane"/>
    <property type="evidence" value="ECO:0007669"/>
    <property type="project" value="GOC"/>
</dbReference>
<dbReference type="GO" id="GO:0000035">
    <property type="term" value="F:acyl binding"/>
    <property type="evidence" value="ECO:0007669"/>
    <property type="project" value="TreeGrafter"/>
</dbReference>
<dbReference type="GO" id="GO:0000036">
    <property type="term" value="F:acyl carrier activity"/>
    <property type="evidence" value="ECO:0007669"/>
    <property type="project" value="UniProtKB-UniRule"/>
</dbReference>
<dbReference type="GO" id="GO:0009245">
    <property type="term" value="P:lipid A biosynthetic process"/>
    <property type="evidence" value="ECO:0007669"/>
    <property type="project" value="TreeGrafter"/>
</dbReference>
<dbReference type="FunFam" id="1.10.1200.10:FF:000001">
    <property type="entry name" value="Acyl carrier protein"/>
    <property type="match status" value="1"/>
</dbReference>
<dbReference type="Gene3D" id="1.10.1200.10">
    <property type="entry name" value="ACP-like"/>
    <property type="match status" value="1"/>
</dbReference>
<dbReference type="HAMAP" id="MF_01217">
    <property type="entry name" value="Acyl_carrier"/>
    <property type="match status" value="1"/>
</dbReference>
<dbReference type="InterPro" id="IPR003231">
    <property type="entry name" value="ACP"/>
</dbReference>
<dbReference type="InterPro" id="IPR036736">
    <property type="entry name" value="ACP-like_sf"/>
</dbReference>
<dbReference type="InterPro" id="IPR009081">
    <property type="entry name" value="PP-bd_ACP"/>
</dbReference>
<dbReference type="InterPro" id="IPR006162">
    <property type="entry name" value="Ppantetheine_attach_site"/>
</dbReference>
<dbReference type="NCBIfam" id="TIGR00517">
    <property type="entry name" value="acyl_carrier"/>
    <property type="match status" value="1"/>
</dbReference>
<dbReference type="NCBIfam" id="NF002148">
    <property type="entry name" value="PRK00982.1-2"/>
    <property type="match status" value="1"/>
</dbReference>
<dbReference type="NCBIfam" id="NF002149">
    <property type="entry name" value="PRK00982.1-3"/>
    <property type="match status" value="1"/>
</dbReference>
<dbReference type="NCBIfam" id="NF002150">
    <property type="entry name" value="PRK00982.1-4"/>
    <property type="match status" value="1"/>
</dbReference>
<dbReference type="NCBIfam" id="NF002151">
    <property type="entry name" value="PRK00982.1-5"/>
    <property type="match status" value="1"/>
</dbReference>
<dbReference type="PANTHER" id="PTHR20863">
    <property type="entry name" value="ACYL CARRIER PROTEIN"/>
    <property type="match status" value="1"/>
</dbReference>
<dbReference type="PANTHER" id="PTHR20863:SF76">
    <property type="entry name" value="CARRIER DOMAIN-CONTAINING PROTEIN"/>
    <property type="match status" value="1"/>
</dbReference>
<dbReference type="Pfam" id="PF00550">
    <property type="entry name" value="PP-binding"/>
    <property type="match status" value="1"/>
</dbReference>
<dbReference type="SUPFAM" id="SSF47336">
    <property type="entry name" value="ACP-like"/>
    <property type="match status" value="1"/>
</dbReference>
<dbReference type="PROSITE" id="PS50075">
    <property type="entry name" value="CARRIER"/>
    <property type="match status" value="1"/>
</dbReference>
<dbReference type="PROSITE" id="PS00012">
    <property type="entry name" value="PHOSPHOPANTETHEINE"/>
    <property type="match status" value="1"/>
</dbReference>
<accession>Q2KW22</accession>
<reference key="1">
    <citation type="journal article" date="2006" name="J. Bacteriol.">
        <title>Comparison of the genome sequence of the poultry pathogen Bordetella avium with those of B. bronchiseptica, B. pertussis, and B. parapertussis reveals extensive diversity in surface structures associated with host interaction.</title>
        <authorList>
            <person name="Sebaihia M."/>
            <person name="Preston A."/>
            <person name="Maskell D.J."/>
            <person name="Kuzmiak H."/>
            <person name="Connell T.D."/>
            <person name="King N.D."/>
            <person name="Orndorff P.E."/>
            <person name="Miyamoto D.M."/>
            <person name="Thomson N.R."/>
            <person name="Harris D."/>
            <person name="Goble A."/>
            <person name="Lord A."/>
            <person name="Murphy L."/>
            <person name="Quail M.A."/>
            <person name="Rutter S."/>
            <person name="Squares R."/>
            <person name="Squares S."/>
            <person name="Woodward J."/>
            <person name="Parkhill J."/>
            <person name="Temple L.M."/>
        </authorList>
    </citation>
    <scope>NUCLEOTIDE SEQUENCE [LARGE SCALE GENOMIC DNA]</scope>
    <source>
        <strain>197N</strain>
    </source>
</reference>
<protein>
    <recommendedName>
        <fullName evidence="1">Acyl carrier protein</fullName>
        <shortName evidence="1">ACP</shortName>
    </recommendedName>
</protein>
<feature type="chain" id="PRO_1000066562" description="Acyl carrier protein">
    <location>
        <begin position="1"/>
        <end position="79"/>
    </location>
</feature>
<feature type="domain" description="Carrier" evidence="2">
    <location>
        <begin position="2"/>
        <end position="77"/>
    </location>
</feature>
<feature type="modified residue" description="O-(pantetheine 4'-phosphoryl)serine" evidence="2">
    <location>
        <position position="37"/>
    </location>
</feature>
<evidence type="ECO:0000255" key="1">
    <source>
        <dbReference type="HAMAP-Rule" id="MF_01217"/>
    </source>
</evidence>
<evidence type="ECO:0000255" key="2">
    <source>
        <dbReference type="PROSITE-ProRule" id="PRU00258"/>
    </source>
</evidence>
<comment type="function">
    <text evidence="1">Carrier of the growing fatty acid chain in fatty acid biosynthesis.</text>
</comment>
<comment type="pathway">
    <text evidence="1">Lipid metabolism; fatty acid biosynthesis.</text>
</comment>
<comment type="subcellular location">
    <subcellularLocation>
        <location evidence="1">Cytoplasm</location>
    </subcellularLocation>
</comment>
<comment type="PTM">
    <text evidence="1">4'-phosphopantetheine is transferred from CoA to a specific serine of apo-ACP by AcpS. This modification is essential for activity because fatty acids are bound in thioester linkage to the sulfhydryl of the prosthetic group.</text>
</comment>
<comment type="similarity">
    <text evidence="1">Belongs to the acyl carrier protein (ACP) family.</text>
</comment>
<keyword id="KW-0963">Cytoplasm</keyword>
<keyword id="KW-0275">Fatty acid biosynthesis</keyword>
<keyword id="KW-0276">Fatty acid metabolism</keyword>
<keyword id="KW-0444">Lipid biosynthesis</keyword>
<keyword id="KW-0443">Lipid metabolism</keyword>
<keyword id="KW-0596">Phosphopantetheine</keyword>
<keyword id="KW-0597">Phosphoprotein</keyword>
<keyword id="KW-1185">Reference proteome</keyword>
<name>ACP_BORA1</name>